<organism>
    <name type="scientific">Homo sapiens</name>
    <name type="common">Human</name>
    <dbReference type="NCBI Taxonomy" id="9606"/>
    <lineage>
        <taxon>Eukaryota</taxon>
        <taxon>Metazoa</taxon>
        <taxon>Chordata</taxon>
        <taxon>Craniata</taxon>
        <taxon>Vertebrata</taxon>
        <taxon>Euteleostomi</taxon>
        <taxon>Mammalia</taxon>
        <taxon>Eutheria</taxon>
        <taxon>Euarchontoglires</taxon>
        <taxon>Primates</taxon>
        <taxon>Haplorrhini</taxon>
        <taxon>Catarrhini</taxon>
        <taxon>Hominidae</taxon>
        <taxon>Homo</taxon>
    </lineage>
</organism>
<gene>
    <name type="primary">ABCC5</name>
    <name type="synonym">MRP5</name>
</gene>
<accession>O15440</accession>
<accession>B9EIQ2</accession>
<accession>O14517</accession>
<accession>Q29ZA9</accession>
<accession>Q29ZB1</accession>
<accession>Q86UX3</accession>
<accession>Q86W30</accession>
<accession>Q9UN85</accession>
<accession>Q9UNP5</accession>
<accession>Q9UQC3</accession>
<protein>
    <recommendedName>
        <fullName>ATP-binding cassette sub-family C member 5</fullName>
        <ecNumber evidence="10 11 13 14 17 18">7.6.2.-</ecNumber>
        <ecNumber evidence="7 9 11 13">7.6.2.2</ecNumber>
    </recommendedName>
    <alternativeName>
        <fullName evidence="23">Multi-specific organic anion transporter C</fullName>
        <shortName evidence="23">MOAT-C</shortName>
    </alternativeName>
    <alternativeName>
        <fullName>Multidrug resistance-associated protein 5</fullName>
    </alternativeName>
    <alternativeName>
        <fullName>SMRP</fullName>
    </alternativeName>
    <alternativeName>
        <fullName evidence="20">pABC11</fullName>
    </alternativeName>
</protein>
<feature type="chain" id="PRO_0000093363" description="ATP-binding cassette sub-family C member 5">
    <location>
        <begin position="1"/>
        <end position="1437"/>
    </location>
</feature>
<feature type="transmembrane region" description="Helical" evidence="4">
    <location>
        <begin position="179"/>
        <end position="199"/>
    </location>
</feature>
<feature type="transmembrane region" description="Helical" evidence="4">
    <location>
        <begin position="219"/>
        <end position="239"/>
    </location>
</feature>
<feature type="transmembrane region" description="Helical" evidence="4">
    <location>
        <begin position="296"/>
        <end position="316"/>
    </location>
</feature>
<feature type="transmembrane region" description="Helical" evidence="4">
    <location>
        <begin position="317"/>
        <end position="337"/>
    </location>
</feature>
<feature type="transmembrane region" description="Helical" evidence="4">
    <location>
        <begin position="400"/>
        <end position="420"/>
    </location>
</feature>
<feature type="transmembrane region" description="Helical" evidence="4">
    <location>
        <begin position="434"/>
        <end position="454"/>
    </location>
</feature>
<feature type="transmembrane region" description="Helical" evidence="4">
    <location>
        <begin position="608"/>
        <end position="628"/>
    </location>
</feature>
<feature type="transmembrane region" description="Helical" evidence="4">
    <location>
        <begin position="848"/>
        <end position="868"/>
    </location>
</feature>
<feature type="transmembrane region" description="Helical" evidence="4">
    <location>
        <begin position="917"/>
        <end position="937"/>
    </location>
</feature>
<feature type="transmembrane region" description="Helical" evidence="4">
    <location>
        <begin position="997"/>
        <end position="1017"/>
    </location>
</feature>
<feature type="transmembrane region" description="Helical" evidence="4">
    <location>
        <begin position="1018"/>
        <end position="1038"/>
    </location>
</feature>
<feature type="transmembrane region" description="Helical" evidence="4">
    <location>
        <begin position="1104"/>
        <end position="1124"/>
    </location>
</feature>
<feature type="transmembrane region" description="Helical" evidence="4">
    <location>
        <begin position="1127"/>
        <end position="1147"/>
    </location>
</feature>
<feature type="domain" description="ABC transmembrane type-1 1" evidence="4">
    <location>
        <begin position="179"/>
        <end position="459"/>
    </location>
</feature>
<feature type="domain" description="ABC transporter 1" evidence="3">
    <location>
        <begin position="562"/>
        <end position="783"/>
    </location>
</feature>
<feature type="domain" description="ABC transmembrane type-1 2" evidence="4">
    <location>
        <begin position="859"/>
        <end position="1155"/>
    </location>
</feature>
<feature type="domain" description="ABC transporter 2" evidence="3">
    <location>
        <begin position="1193"/>
        <end position="1427"/>
    </location>
</feature>
<feature type="region of interest" description="Disordered" evidence="5">
    <location>
        <begin position="15"/>
        <end position="41"/>
    </location>
</feature>
<feature type="region of interest" description="Disordered" evidence="5">
    <location>
        <begin position="501"/>
        <end position="538"/>
    </location>
</feature>
<feature type="region of interest" description="Disordered" evidence="5">
    <location>
        <begin position="794"/>
        <end position="827"/>
    </location>
</feature>
<feature type="compositionally biased region" description="Basic and acidic residues" evidence="5">
    <location>
        <begin position="19"/>
        <end position="41"/>
    </location>
</feature>
<feature type="compositionally biased region" description="Polar residues" evidence="5">
    <location>
        <begin position="501"/>
        <end position="511"/>
    </location>
</feature>
<feature type="compositionally biased region" description="Basic residues" evidence="5">
    <location>
        <begin position="514"/>
        <end position="529"/>
    </location>
</feature>
<feature type="compositionally biased region" description="Basic and acidic residues" evidence="5">
    <location>
        <begin position="795"/>
        <end position="827"/>
    </location>
</feature>
<feature type="binding site" evidence="3">
    <location>
        <begin position="595"/>
        <end position="602"/>
    </location>
    <ligand>
        <name>ATP</name>
        <dbReference type="ChEBI" id="CHEBI:30616"/>
        <label>1</label>
    </ligand>
</feature>
<feature type="binding site" evidence="3">
    <location>
        <begin position="1227"/>
        <end position="1234"/>
    </location>
    <ligand>
        <name>ATP</name>
        <dbReference type="ChEBI" id="CHEBI:30616"/>
        <label>2</label>
    </ligand>
</feature>
<feature type="modified residue" description="Phosphoserine" evidence="32">
    <location>
        <position position="14"/>
    </location>
</feature>
<feature type="modified residue" description="Phosphoserine" evidence="32">
    <location>
        <position position="19"/>
    </location>
</feature>
<feature type="modified residue" description="Phosphoserine" evidence="32">
    <location>
        <position position="60"/>
    </location>
</feature>
<feature type="modified residue" description="Phosphoserine" evidence="32">
    <location>
        <position position="505"/>
    </location>
</feature>
<feature type="modified residue" description="Phosphoserine" evidence="30 31 32">
    <location>
        <position position="509"/>
    </location>
</feature>
<feature type="modified residue" description="Phosphothreonine" evidence="30">
    <location>
        <position position="513"/>
    </location>
</feature>
<feature type="glycosylation site" description="N-linked (GlcNAc...) asparagine" evidence="2">
    <location>
        <position position="494"/>
    </location>
</feature>
<feature type="glycosylation site" description="N-linked (GlcNAc...) asparagine" evidence="2">
    <location>
        <position position="636"/>
    </location>
</feature>
<feature type="glycosylation site" description="N-linked (GlcNAc...) asparagine" evidence="2">
    <location>
        <position position="684"/>
    </location>
</feature>
<feature type="glycosylation site" description="N-linked (GlcNAc...) asparagine" evidence="2">
    <location>
        <position position="890"/>
    </location>
</feature>
<feature type="glycosylation site" description="N-linked (GlcNAc...) asparagine" evidence="2">
    <location>
        <position position="897"/>
    </location>
</feature>
<feature type="glycosylation site" description="N-linked (GlcNAc...) asparagine" evidence="2">
    <location>
        <position position="1044"/>
    </location>
</feature>
<feature type="glycosylation site" description="N-linked (GlcNAc...) asparagine" evidence="2">
    <location>
        <position position="1329"/>
    </location>
</feature>
<feature type="glycosylation site" description="N-linked (GlcNAc...) asparagine" evidence="2">
    <location>
        <position position="1417"/>
    </location>
</feature>
<feature type="splice variant" id="VSP_043397" description="In isoform 2." evidence="21 22">
    <original>AFMVKHLLEYTQATESNLQYSLLLVLGL</original>
    <variation>PSFGDCSISAEVCGNRLHCTAILLSCFT</variation>
    <location>
        <begin position="198"/>
        <end position="225"/>
    </location>
</feature>
<feature type="splice variant" id="VSP_043398" description="In isoform 3." evidence="22">
    <original>AFMVKHLLEYTQATE</original>
    <variation>LAWCCQDLDLGGVSL</variation>
    <location>
        <begin position="198"/>
        <end position="212"/>
    </location>
</feature>
<feature type="splice variant" id="VSP_043399" description="In isoform 4." evidence="22">
    <original>AFMVKHLLEYT</original>
    <variation>NFQDGCILRSE</variation>
    <location>
        <begin position="198"/>
        <end position="208"/>
    </location>
</feature>
<feature type="splice variant" id="VSP_043400" description="In isoform 4." evidence="22">
    <location>
        <begin position="209"/>
        <end position="225"/>
    </location>
</feature>
<feature type="splice variant" id="VSP_043401" description="In isoform 3." evidence="22">
    <location>
        <begin position="213"/>
        <end position="225"/>
    </location>
</feature>
<feature type="splice variant" id="VSP_043402" description="In isoform 2, isoform 3 and isoform 4." evidence="21 22">
    <location>
        <begin position="226"/>
        <end position="1437"/>
    </location>
</feature>
<feature type="splice variant" id="VSP_055354" description="In isoform 5." evidence="24">
    <location>
        <begin position="1033"/>
        <end position="1075"/>
    </location>
</feature>
<feature type="sequence conflict" description="In Ref. 3; BAA76608." evidence="25" ref="3">
    <original>R</original>
    <variation>P</variation>
    <location>
        <position position="176"/>
    </location>
</feature>
<feature type="sequence conflict" description="In Ref. 1; AAD04169." evidence="25" ref="1">
    <original>S</original>
    <variation>G</variation>
    <location>
        <position position="400"/>
    </location>
</feature>
<feature type="sequence conflict" description="In Ref. 2; AAD37716." evidence="25" ref="2">
    <original>I</original>
    <variation>V</variation>
    <location>
        <position position="581"/>
    </location>
</feature>
<feature type="sequence conflict" description="In Ref. 3; BAA76608 and 8; BAA22887." evidence="25" ref="3 8">
    <original>T</original>
    <variation>N</variation>
    <location>
        <position position="1383"/>
    </location>
</feature>
<dbReference type="EC" id="7.6.2.-" evidence="10 11 13 14 17 18"/>
<dbReference type="EC" id="7.6.2.2" evidence="7 9 11 13"/>
<dbReference type="EMBL" id="AF104942">
    <property type="protein sequence ID" value="AAD04169.1"/>
    <property type="molecule type" value="mRNA"/>
</dbReference>
<dbReference type="EMBL" id="AF146074">
    <property type="protein sequence ID" value="AAD37716.1"/>
    <property type="molecule type" value="mRNA"/>
</dbReference>
<dbReference type="EMBL" id="AB019002">
    <property type="protein sequence ID" value="BAA76608.1"/>
    <property type="molecule type" value="mRNA"/>
</dbReference>
<dbReference type="EMBL" id="U83661">
    <property type="protein sequence ID" value="AAB71758.2"/>
    <property type="molecule type" value="mRNA"/>
</dbReference>
<dbReference type="EMBL" id="AY754874">
    <property type="protein sequence ID" value="AAW82948.1"/>
    <property type="molecule type" value="mRNA"/>
</dbReference>
<dbReference type="EMBL" id="AY754875">
    <property type="protein sequence ID" value="AAW82949.1"/>
    <property type="molecule type" value="mRNA"/>
</dbReference>
<dbReference type="EMBL" id="AY754876">
    <property type="protein sequence ID" value="AAW82950.1"/>
    <property type="molecule type" value="mRNA"/>
</dbReference>
<dbReference type="EMBL" id="AY196484">
    <property type="protein sequence ID" value="AAO49801.1"/>
    <property type="molecule type" value="mRNA"/>
</dbReference>
<dbReference type="EMBL" id="AC068644">
    <property type="status" value="NOT_ANNOTATED_CDS"/>
    <property type="molecule type" value="Genomic_DNA"/>
</dbReference>
<dbReference type="EMBL" id="CH471052">
    <property type="protein sequence ID" value="EAW78307.1"/>
    <property type="molecule type" value="Genomic_DNA"/>
</dbReference>
<dbReference type="EMBL" id="CH471052">
    <property type="protein sequence ID" value="EAW78308.1"/>
    <property type="molecule type" value="Genomic_DNA"/>
</dbReference>
<dbReference type="EMBL" id="BC050744">
    <property type="protein sequence ID" value="AAH50744.1"/>
    <property type="molecule type" value="mRNA"/>
</dbReference>
<dbReference type="EMBL" id="BC140771">
    <property type="protein sequence ID" value="AAI40772.1"/>
    <property type="molecule type" value="mRNA"/>
</dbReference>
<dbReference type="EMBL" id="BC142719">
    <property type="protein sequence ID" value="AAI42720.1"/>
    <property type="molecule type" value="mRNA"/>
</dbReference>
<dbReference type="EMBL" id="AB005659">
    <property type="protein sequence ID" value="BAA22887.1"/>
    <property type="molecule type" value="mRNA"/>
</dbReference>
<dbReference type="CCDS" id="CCDS33898.1">
    <molecule id="O15440-4"/>
</dbReference>
<dbReference type="CCDS" id="CCDS43176.1">
    <molecule id="O15440-1"/>
</dbReference>
<dbReference type="PIR" id="JC5667">
    <property type="entry name" value="JC5667"/>
</dbReference>
<dbReference type="RefSeq" id="NP_001018881.1">
    <molecule id="O15440-4"/>
    <property type="nucleotide sequence ID" value="NM_001023587.3"/>
</dbReference>
<dbReference type="RefSeq" id="NP_001306961.1">
    <property type="nucleotide sequence ID" value="NM_001320032.1"/>
</dbReference>
<dbReference type="RefSeq" id="NP_005679.2">
    <molecule id="O15440-1"/>
    <property type="nucleotide sequence ID" value="NM_005688.4"/>
</dbReference>
<dbReference type="RefSeq" id="XP_005247115.1">
    <property type="nucleotide sequence ID" value="XM_005247058.4"/>
</dbReference>
<dbReference type="RefSeq" id="XP_005247116.1">
    <molecule id="O15440-1"/>
    <property type="nucleotide sequence ID" value="XM_005247059.6"/>
</dbReference>
<dbReference type="RefSeq" id="XP_011510616.1">
    <molecule id="O15440-1"/>
    <property type="nucleotide sequence ID" value="XM_011512314.3"/>
</dbReference>
<dbReference type="RefSeq" id="XP_016860982.1">
    <molecule id="O15440-4"/>
    <property type="nucleotide sequence ID" value="XM_017005493.2"/>
</dbReference>
<dbReference type="RefSeq" id="XP_016860983.1">
    <property type="nucleotide sequence ID" value="XM_017005494.1"/>
</dbReference>
<dbReference type="RefSeq" id="XP_047303054.1">
    <molecule id="O15440-1"/>
    <property type="nucleotide sequence ID" value="XM_047447098.1"/>
</dbReference>
<dbReference type="RefSeq" id="XP_047303055.1">
    <molecule id="O15440-4"/>
    <property type="nucleotide sequence ID" value="XM_047447099.1"/>
</dbReference>
<dbReference type="RefSeq" id="XP_047303056.1">
    <molecule id="O15440-4"/>
    <property type="nucleotide sequence ID" value="XM_047447100.1"/>
</dbReference>
<dbReference type="RefSeq" id="XP_054200801.1">
    <molecule id="O15440-1"/>
    <property type="nucleotide sequence ID" value="XM_054344826.1"/>
</dbReference>
<dbReference type="RefSeq" id="XP_054200802.1">
    <molecule id="O15440-1"/>
    <property type="nucleotide sequence ID" value="XM_054344827.1"/>
</dbReference>
<dbReference type="RefSeq" id="XP_054200803.1">
    <molecule id="O15440-1"/>
    <property type="nucleotide sequence ID" value="XM_054344828.1"/>
</dbReference>
<dbReference type="RefSeq" id="XP_054200804.1">
    <molecule id="O15440-1"/>
    <property type="nucleotide sequence ID" value="XM_054344829.1"/>
</dbReference>
<dbReference type="RefSeq" id="XP_054200806.1">
    <molecule id="O15440-4"/>
    <property type="nucleotide sequence ID" value="XM_054344831.1"/>
</dbReference>
<dbReference type="RefSeq" id="XP_054200807.1">
    <molecule id="O15440-4"/>
    <property type="nucleotide sequence ID" value="XM_054344832.1"/>
</dbReference>
<dbReference type="RefSeq" id="XP_054200808.1">
    <molecule id="O15440-4"/>
    <property type="nucleotide sequence ID" value="XM_054344833.1"/>
</dbReference>
<dbReference type="PDB" id="8KCI">
    <property type="method" value="EM"/>
    <property type="resolution" value="3.94 A"/>
    <property type="chains" value="A=1-1437"/>
</dbReference>
<dbReference type="PDB" id="8WI2">
    <property type="method" value="EM"/>
    <property type="resolution" value="4.06 A"/>
    <property type="chains" value="A=94-1427, B=46-64"/>
</dbReference>
<dbReference type="PDB" id="8WI3">
    <property type="method" value="EM"/>
    <property type="resolution" value="3.38 A"/>
    <property type="chains" value="A=1-1437"/>
</dbReference>
<dbReference type="PDB" id="8WI4">
    <property type="method" value="EM"/>
    <property type="resolution" value="3.20 A"/>
    <property type="chains" value="A=1-1437"/>
</dbReference>
<dbReference type="PDB" id="8WI5">
    <property type="method" value="EM"/>
    <property type="resolution" value="3.46 A"/>
    <property type="chains" value="A=94-1437, B=46-69"/>
</dbReference>
<dbReference type="PDBsum" id="8KCI"/>
<dbReference type="PDBsum" id="8WI2"/>
<dbReference type="PDBsum" id="8WI3"/>
<dbReference type="PDBsum" id="8WI4"/>
<dbReference type="PDBsum" id="8WI5"/>
<dbReference type="EMDB" id="EMD-37105"/>
<dbReference type="EMDB" id="EMD-37554"/>
<dbReference type="EMDB" id="EMD-37555"/>
<dbReference type="EMDB" id="EMD-37556"/>
<dbReference type="EMDB" id="EMD-37557"/>
<dbReference type="EMDB" id="EMD-37558"/>
<dbReference type="SMR" id="O15440"/>
<dbReference type="BioGRID" id="115368">
    <property type="interactions" value="54"/>
</dbReference>
<dbReference type="FunCoup" id="O15440">
    <property type="interactions" value="716"/>
</dbReference>
<dbReference type="IntAct" id="O15440">
    <property type="interactions" value="25"/>
</dbReference>
<dbReference type="MINT" id="O15440"/>
<dbReference type="STRING" id="9606.ENSP00000333926"/>
<dbReference type="BindingDB" id="O15440"/>
<dbReference type="ChEMBL" id="CHEMBL2046258"/>
<dbReference type="DrugBank" id="DB00718">
    <property type="generic name" value="Adefovir dipivoxil"/>
</dbReference>
<dbReference type="DrugBank" id="DB00770">
    <property type="generic name" value="Alprostadil"/>
</dbReference>
<dbReference type="DrugBank" id="DB01076">
    <property type="generic name" value="Atorvastatin"/>
</dbReference>
<dbReference type="DrugBank" id="DB00515">
    <property type="generic name" value="Cisplatin"/>
</dbReference>
<dbReference type="DrugBank" id="DB11672">
    <property type="generic name" value="Curcumin"/>
</dbReference>
<dbReference type="DrugBank" id="DB14635">
    <property type="generic name" value="Curcumin sulfate"/>
</dbReference>
<dbReference type="DrugBank" id="DB02527">
    <property type="generic name" value="Cyclic adenosine monophosphate"/>
</dbReference>
<dbReference type="DrugBank" id="DB00917">
    <property type="generic name" value="Dinoprostone"/>
</dbReference>
<dbReference type="DrugBank" id="DB00975">
    <property type="generic name" value="Dipyridamole"/>
</dbReference>
<dbReference type="DrugBank" id="DB00544">
    <property type="generic name" value="Fluorouracil"/>
</dbReference>
<dbReference type="DrugBank" id="DB00143">
    <property type="generic name" value="Glutathione"/>
</dbReference>
<dbReference type="DrugBank" id="DB08818">
    <property type="generic name" value="Hyaluronic acid"/>
</dbReference>
<dbReference type="DrugBank" id="DB01033">
    <property type="generic name" value="Mercaptopurine"/>
</dbReference>
<dbReference type="DrugBank" id="DB00642">
    <property type="generic name" value="Pemetrexed"/>
</dbReference>
<dbReference type="DrugBank" id="DB01032">
    <property type="generic name" value="Probenecid"/>
</dbReference>
<dbReference type="DrugBank" id="DB01045">
    <property type="generic name" value="Rifampin"/>
</dbReference>
<dbReference type="DrugBank" id="DB00203">
    <property type="generic name" value="Sildenafil"/>
</dbReference>
<dbReference type="DrugBank" id="DB01138">
    <property type="generic name" value="Sulfinpyrazone"/>
</dbReference>
<dbReference type="DrugBank" id="DB00495">
    <property type="generic name" value="Zidovudine"/>
</dbReference>
<dbReference type="DrugCentral" id="O15440"/>
<dbReference type="GuidetoPHARMACOLOGY" id="783"/>
<dbReference type="TCDB" id="3.A.1.208.15">
    <property type="family name" value="the atp-binding cassette (abc) superfamily"/>
</dbReference>
<dbReference type="GlyCosmos" id="O15440">
    <property type="glycosylation" value="8 sites, No reported glycans"/>
</dbReference>
<dbReference type="GlyGen" id="O15440">
    <property type="glycosylation" value="9 sites, 1 O-linked glycan (1 site)"/>
</dbReference>
<dbReference type="iPTMnet" id="O15440"/>
<dbReference type="PhosphoSitePlus" id="O15440"/>
<dbReference type="BioMuta" id="ABCC5"/>
<dbReference type="jPOST" id="O15440"/>
<dbReference type="MassIVE" id="O15440"/>
<dbReference type="PaxDb" id="9606-ENSP00000333926"/>
<dbReference type="PeptideAtlas" id="O15440"/>
<dbReference type="ProteomicsDB" id="48667">
    <molecule id="O15440-1"/>
</dbReference>
<dbReference type="ProteomicsDB" id="48668">
    <molecule id="O15440-2"/>
</dbReference>
<dbReference type="ProteomicsDB" id="48669">
    <molecule id="O15440-3"/>
</dbReference>
<dbReference type="ProteomicsDB" id="48670">
    <molecule id="O15440-4"/>
</dbReference>
<dbReference type="ProteomicsDB" id="69929"/>
<dbReference type="Pumba" id="O15440"/>
<dbReference type="Antibodypedia" id="18937">
    <property type="antibodies" value="423 antibodies from 37 providers"/>
</dbReference>
<dbReference type="DNASU" id="10057"/>
<dbReference type="Ensembl" id="ENST00000265586.10">
    <molecule id="O15440-5"/>
    <property type="protein sequence ID" value="ENSP00000265586.6"/>
    <property type="gene ID" value="ENSG00000114770.17"/>
</dbReference>
<dbReference type="Ensembl" id="ENST00000334444.11">
    <molecule id="O15440-1"/>
    <property type="protein sequence ID" value="ENSP00000333926.6"/>
    <property type="gene ID" value="ENSG00000114770.17"/>
</dbReference>
<dbReference type="Ensembl" id="ENST00000382494.6">
    <molecule id="O15440-4"/>
    <property type="protein sequence ID" value="ENSP00000371934.2"/>
    <property type="gene ID" value="ENSG00000114770.17"/>
</dbReference>
<dbReference type="Ensembl" id="ENST00000392579.6">
    <molecule id="O15440-2"/>
    <property type="protein sequence ID" value="ENSP00000376358.2"/>
    <property type="gene ID" value="ENSG00000114770.17"/>
</dbReference>
<dbReference type="Ensembl" id="ENST00000443376.5">
    <molecule id="O15440-3"/>
    <property type="protein sequence ID" value="ENSP00000416840.1"/>
    <property type="gene ID" value="ENSG00000114770.17"/>
</dbReference>
<dbReference type="GeneID" id="10057"/>
<dbReference type="KEGG" id="hsa:10057"/>
<dbReference type="MANE-Select" id="ENST00000334444.11">
    <property type="protein sequence ID" value="ENSP00000333926.6"/>
    <property type="RefSeq nucleotide sequence ID" value="NM_005688.4"/>
    <property type="RefSeq protein sequence ID" value="NP_005679.2"/>
</dbReference>
<dbReference type="UCSC" id="uc003fmg.4">
    <molecule id="O15440-1"/>
    <property type="organism name" value="human"/>
</dbReference>
<dbReference type="AGR" id="HGNC:56"/>
<dbReference type="CTD" id="10057"/>
<dbReference type="DisGeNET" id="10057"/>
<dbReference type="GeneCards" id="ABCC5"/>
<dbReference type="HGNC" id="HGNC:56">
    <property type="gene designation" value="ABCC5"/>
</dbReference>
<dbReference type="HPA" id="ENSG00000114770">
    <property type="expression patterns" value="Low tissue specificity"/>
</dbReference>
<dbReference type="MIM" id="605251">
    <property type="type" value="gene"/>
</dbReference>
<dbReference type="neXtProt" id="NX_O15440"/>
<dbReference type="OpenTargets" id="ENSG00000114770"/>
<dbReference type="PharmGKB" id="PA395"/>
<dbReference type="VEuPathDB" id="HostDB:ENSG00000114770"/>
<dbReference type="eggNOG" id="KOG0054">
    <property type="taxonomic scope" value="Eukaryota"/>
</dbReference>
<dbReference type="GeneTree" id="ENSGT00940000155470"/>
<dbReference type="HOGENOM" id="CLU_000604_27_3_1"/>
<dbReference type="InParanoid" id="O15440"/>
<dbReference type="OMA" id="QVTDAWT"/>
<dbReference type="OrthoDB" id="6500128at2759"/>
<dbReference type="PAN-GO" id="O15440">
    <property type="GO annotations" value="3 GO annotations based on evolutionary models"/>
</dbReference>
<dbReference type="PhylomeDB" id="O15440"/>
<dbReference type="TreeFam" id="TF105202"/>
<dbReference type="BRENDA" id="7.6.2.3">
    <property type="organism ID" value="2681"/>
</dbReference>
<dbReference type="PathwayCommons" id="O15440"/>
<dbReference type="Reactome" id="R-HSA-2142850">
    <property type="pathway name" value="Hyaluronan biosynthesis and export"/>
</dbReference>
<dbReference type="Reactome" id="R-HSA-382556">
    <property type="pathway name" value="ABC-family proteins mediated transport"/>
</dbReference>
<dbReference type="Reactome" id="R-HSA-9748787">
    <property type="pathway name" value="Azathioprine ADME"/>
</dbReference>
<dbReference type="Reactome" id="R-HSA-9753281">
    <property type="pathway name" value="Paracetamol ADME"/>
</dbReference>
<dbReference type="SignaLink" id="O15440"/>
<dbReference type="BioGRID-ORCS" id="10057">
    <property type="hits" value="9 hits in 1159 CRISPR screens"/>
</dbReference>
<dbReference type="ChiTaRS" id="ABCC5">
    <property type="organism name" value="human"/>
</dbReference>
<dbReference type="GeneWiki" id="ABCC5"/>
<dbReference type="GenomeRNAi" id="10057"/>
<dbReference type="Pharos" id="O15440">
    <property type="development level" value="Tchem"/>
</dbReference>
<dbReference type="PRO" id="PR:O15440"/>
<dbReference type="Proteomes" id="UP000005640">
    <property type="component" value="Chromosome 3"/>
</dbReference>
<dbReference type="RNAct" id="O15440">
    <property type="molecule type" value="protein"/>
</dbReference>
<dbReference type="Bgee" id="ENSG00000114770">
    <property type="expression patterns" value="Expressed in right hemisphere of cerebellum and 201 other cell types or tissues"/>
</dbReference>
<dbReference type="ExpressionAtlas" id="O15440">
    <property type="expression patterns" value="baseline and differential"/>
</dbReference>
<dbReference type="GO" id="GO:0016324">
    <property type="term" value="C:apical plasma membrane"/>
    <property type="evidence" value="ECO:0000314"/>
    <property type="project" value="UniProtKB"/>
</dbReference>
<dbReference type="GO" id="GO:0016323">
    <property type="term" value="C:basolateral plasma membrane"/>
    <property type="evidence" value="ECO:0000314"/>
    <property type="project" value="ARUK-UCL"/>
</dbReference>
<dbReference type="GO" id="GO:0010008">
    <property type="term" value="C:endosome membrane"/>
    <property type="evidence" value="ECO:0007669"/>
    <property type="project" value="UniProtKB-SubCell"/>
</dbReference>
<dbReference type="GO" id="GO:0005796">
    <property type="term" value="C:Golgi lumen"/>
    <property type="evidence" value="ECO:0007669"/>
    <property type="project" value="UniProtKB-SubCell"/>
</dbReference>
<dbReference type="GO" id="GO:0016020">
    <property type="term" value="C:membrane"/>
    <property type="evidence" value="ECO:0000314"/>
    <property type="project" value="MGI"/>
</dbReference>
<dbReference type="GO" id="GO:0005886">
    <property type="term" value="C:plasma membrane"/>
    <property type="evidence" value="ECO:0000314"/>
    <property type="project" value="ARUK-UCL"/>
</dbReference>
<dbReference type="GO" id="GO:0008559">
    <property type="term" value="F:ABC-type xenobiotic transporter activity"/>
    <property type="evidence" value="ECO:0000315"/>
    <property type="project" value="UniProtKB"/>
</dbReference>
<dbReference type="GO" id="GO:0005524">
    <property type="term" value="F:ATP binding"/>
    <property type="evidence" value="ECO:0000304"/>
    <property type="project" value="ProtInc"/>
</dbReference>
<dbReference type="GO" id="GO:0016887">
    <property type="term" value="F:ATP hydrolysis activity"/>
    <property type="evidence" value="ECO:0007669"/>
    <property type="project" value="InterPro"/>
</dbReference>
<dbReference type="GO" id="GO:0043225">
    <property type="term" value="F:ATPase-coupled inorganic anion transmembrane transporter activity"/>
    <property type="evidence" value="ECO:0000304"/>
    <property type="project" value="Reactome"/>
</dbReference>
<dbReference type="GO" id="GO:0042626">
    <property type="term" value="F:ATPase-coupled transmembrane transporter activity"/>
    <property type="evidence" value="ECO:0000318"/>
    <property type="project" value="GO_Central"/>
</dbReference>
<dbReference type="GO" id="GO:1901505">
    <property type="term" value="F:carbohydrate derivative transmembrane transporter activity"/>
    <property type="evidence" value="ECO:0007669"/>
    <property type="project" value="Ensembl"/>
</dbReference>
<dbReference type="GO" id="GO:0015562">
    <property type="term" value="F:efflux transmembrane transporter activity"/>
    <property type="evidence" value="ECO:0000314"/>
    <property type="project" value="ARUK-UCL"/>
</dbReference>
<dbReference type="GO" id="GO:0034634">
    <property type="term" value="F:glutathione transmembrane transporter activity"/>
    <property type="evidence" value="ECO:0000314"/>
    <property type="project" value="ARUK-UCL"/>
</dbReference>
<dbReference type="GO" id="GO:0015232">
    <property type="term" value="F:heme transmembrane transporter activity"/>
    <property type="evidence" value="ECO:0000315"/>
    <property type="project" value="UniProtKB"/>
</dbReference>
<dbReference type="GO" id="GO:0022884">
    <property type="term" value="F:macromolecule transmembrane transporter activity"/>
    <property type="evidence" value="ECO:0007669"/>
    <property type="project" value="Ensembl"/>
</dbReference>
<dbReference type="GO" id="GO:0008514">
    <property type="term" value="F:organic anion transmembrane transporter activity"/>
    <property type="evidence" value="ECO:0000304"/>
    <property type="project" value="Reactome"/>
</dbReference>
<dbReference type="GO" id="GO:0015216">
    <property type="term" value="F:purine nucleotide transmembrane transporter activity"/>
    <property type="evidence" value="ECO:0000314"/>
    <property type="project" value="ARUK-UCL"/>
</dbReference>
<dbReference type="GO" id="GO:0042910">
    <property type="term" value="F:xenobiotic transmembrane transporter activity"/>
    <property type="evidence" value="ECO:0000314"/>
    <property type="project" value="ARUK-UCL"/>
</dbReference>
<dbReference type="GO" id="GO:0070730">
    <property type="term" value="P:cAMP transport"/>
    <property type="evidence" value="ECO:0000315"/>
    <property type="project" value="UniProtKB"/>
</dbReference>
<dbReference type="GO" id="GO:0070731">
    <property type="term" value="P:cGMP transport"/>
    <property type="evidence" value="ECO:0000315"/>
    <property type="project" value="UniProtKB"/>
</dbReference>
<dbReference type="GO" id="GO:0140115">
    <property type="term" value="P:export across plasma membrane"/>
    <property type="evidence" value="ECO:0000314"/>
    <property type="project" value="ARUK-UCL"/>
</dbReference>
<dbReference type="GO" id="GO:0098838">
    <property type="term" value="P:folate transmembrane transport"/>
    <property type="evidence" value="ECO:0000315"/>
    <property type="project" value="UniProtKB"/>
</dbReference>
<dbReference type="GO" id="GO:0034775">
    <property type="term" value="P:glutathione transmembrane transport"/>
    <property type="evidence" value="ECO:0000314"/>
    <property type="project" value="ARUK-UCL"/>
</dbReference>
<dbReference type="GO" id="GO:0035351">
    <property type="term" value="P:heme transmembrane transport"/>
    <property type="evidence" value="ECO:0000315"/>
    <property type="project" value="UniProtKB"/>
</dbReference>
<dbReference type="GO" id="GO:0030213">
    <property type="term" value="P:hyaluronan biosynthetic process"/>
    <property type="evidence" value="ECO:0000304"/>
    <property type="project" value="Reactome"/>
</dbReference>
<dbReference type="GO" id="GO:0015865">
    <property type="term" value="P:purine nucleotide transport"/>
    <property type="evidence" value="ECO:0000314"/>
    <property type="project" value="ARUK-UCL"/>
</dbReference>
<dbReference type="GO" id="GO:0055085">
    <property type="term" value="P:transmembrane transport"/>
    <property type="evidence" value="ECO:0000318"/>
    <property type="project" value="GO_Central"/>
</dbReference>
<dbReference type="GO" id="GO:0150104">
    <property type="term" value="P:transport across blood-brain barrier"/>
    <property type="evidence" value="ECO:0000303"/>
    <property type="project" value="ARUK-UCL"/>
</dbReference>
<dbReference type="GO" id="GO:1990961">
    <property type="term" value="P:xenobiotic detoxification by transmembrane export across the plasma membrane"/>
    <property type="evidence" value="ECO:0000304"/>
    <property type="project" value="BHF-UCL"/>
</dbReference>
<dbReference type="GO" id="GO:0006805">
    <property type="term" value="P:xenobiotic metabolic process"/>
    <property type="evidence" value="ECO:0000304"/>
    <property type="project" value="Reactome"/>
</dbReference>
<dbReference type="GO" id="GO:0006855">
    <property type="term" value="P:xenobiotic transmembrane transport"/>
    <property type="evidence" value="ECO:0000304"/>
    <property type="project" value="Reactome"/>
</dbReference>
<dbReference type="GO" id="GO:0042908">
    <property type="term" value="P:xenobiotic transport"/>
    <property type="evidence" value="ECO:0000314"/>
    <property type="project" value="ARUK-UCL"/>
</dbReference>
<dbReference type="CDD" id="cd18592">
    <property type="entry name" value="ABC_6TM_MRP5_8_9_D1"/>
    <property type="match status" value="1"/>
</dbReference>
<dbReference type="CDD" id="cd18599">
    <property type="entry name" value="ABC_6TM_MRP5_8_9_D2"/>
    <property type="match status" value="1"/>
</dbReference>
<dbReference type="CDD" id="cd03250">
    <property type="entry name" value="ABCC_MRP_domain1"/>
    <property type="match status" value="1"/>
</dbReference>
<dbReference type="CDD" id="cd03244">
    <property type="entry name" value="ABCC_MRP_domain2"/>
    <property type="match status" value="1"/>
</dbReference>
<dbReference type="FunFam" id="1.20.1560.10:FF:000012">
    <property type="entry name" value="ATP binding cassette subfamily C member 5"/>
    <property type="match status" value="1"/>
</dbReference>
<dbReference type="FunFam" id="3.40.50.300:FF:000074">
    <property type="entry name" value="Multidrug resistance-associated protein 5 isoform 1"/>
    <property type="match status" value="1"/>
</dbReference>
<dbReference type="FunFam" id="1.20.1560.10:FF:000015">
    <property type="entry name" value="multidrug resistance-associated protein 5 isoform X1"/>
    <property type="match status" value="1"/>
</dbReference>
<dbReference type="FunFam" id="3.40.50.300:FF:000605">
    <property type="entry name" value="multidrug resistance-associated protein 5 isoform X1"/>
    <property type="match status" value="1"/>
</dbReference>
<dbReference type="Gene3D" id="1.20.1560.10">
    <property type="entry name" value="ABC transporter type 1, transmembrane domain"/>
    <property type="match status" value="2"/>
</dbReference>
<dbReference type="Gene3D" id="3.40.50.300">
    <property type="entry name" value="P-loop containing nucleotide triphosphate hydrolases"/>
    <property type="match status" value="2"/>
</dbReference>
<dbReference type="InterPro" id="IPR003593">
    <property type="entry name" value="AAA+_ATPase"/>
</dbReference>
<dbReference type="InterPro" id="IPR011527">
    <property type="entry name" value="ABC1_TM_dom"/>
</dbReference>
<dbReference type="InterPro" id="IPR036640">
    <property type="entry name" value="ABC1_TM_sf"/>
</dbReference>
<dbReference type="InterPro" id="IPR003439">
    <property type="entry name" value="ABC_transporter-like_ATP-bd"/>
</dbReference>
<dbReference type="InterPro" id="IPR017871">
    <property type="entry name" value="ABC_transporter-like_CS"/>
</dbReference>
<dbReference type="InterPro" id="IPR050173">
    <property type="entry name" value="ABC_transporter_C-like"/>
</dbReference>
<dbReference type="InterPro" id="IPR027417">
    <property type="entry name" value="P-loop_NTPase"/>
</dbReference>
<dbReference type="PANTHER" id="PTHR24223">
    <property type="entry name" value="ATP-BINDING CASSETTE SUB-FAMILY C"/>
    <property type="match status" value="1"/>
</dbReference>
<dbReference type="PANTHER" id="PTHR24223:SF196">
    <property type="entry name" value="ATP-BINDING CASSETTE SUB-FAMILY C MEMBER 5"/>
    <property type="match status" value="1"/>
</dbReference>
<dbReference type="Pfam" id="PF00664">
    <property type="entry name" value="ABC_membrane"/>
    <property type="match status" value="2"/>
</dbReference>
<dbReference type="Pfam" id="PF00005">
    <property type="entry name" value="ABC_tran"/>
    <property type="match status" value="2"/>
</dbReference>
<dbReference type="SMART" id="SM00382">
    <property type="entry name" value="AAA"/>
    <property type="match status" value="2"/>
</dbReference>
<dbReference type="SUPFAM" id="SSF90123">
    <property type="entry name" value="ABC transporter transmembrane region"/>
    <property type="match status" value="2"/>
</dbReference>
<dbReference type="SUPFAM" id="SSF52540">
    <property type="entry name" value="P-loop containing nucleoside triphosphate hydrolases"/>
    <property type="match status" value="2"/>
</dbReference>
<dbReference type="PROSITE" id="PS50929">
    <property type="entry name" value="ABC_TM1F"/>
    <property type="match status" value="2"/>
</dbReference>
<dbReference type="PROSITE" id="PS00211">
    <property type="entry name" value="ABC_TRANSPORTER_1"/>
    <property type="match status" value="2"/>
</dbReference>
<dbReference type="PROSITE" id="PS50893">
    <property type="entry name" value="ABC_TRANSPORTER_2"/>
    <property type="match status" value="2"/>
</dbReference>
<evidence type="ECO:0000250" key="1">
    <source>
        <dbReference type="UniProtKB" id="Q9R1X5"/>
    </source>
</evidence>
<evidence type="ECO:0000255" key="2"/>
<evidence type="ECO:0000255" key="3">
    <source>
        <dbReference type="PROSITE-ProRule" id="PRU00434"/>
    </source>
</evidence>
<evidence type="ECO:0000255" key="4">
    <source>
        <dbReference type="PROSITE-ProRule" id="PRU00441"/>
    </source>
</evidence>
<evidence type="ECO:0000256" key="5">
    <source>
        <dbReference type="SAM" id="MobiDB-lite"/>
    </source>
</evidence>
<evidence type="ECO:0000269" key="6">
    <source>
    </source>
</evidence>
<evidence type="ECO:0000269" key="7">
    <source>
    </source>
</evidence>
<evidence type="ECO:0000269" key="8">
    <source>
    </source>
</evidence>
<evidence type="ECO:0000269" key="9">
    <source>
    </source>
</evidence>
<evidence type="ECO:0000269" key="10">
    <source>
    </source>
</evidence>
<evidence type="ECO:0000269" key="11">
    <source>
    </source>
</evidence>
<evidence type="ECO:0000269" key="12">
    <source>
    </source>
</evidence>
<evidence type="ECO:0000269" key="13">
    <source>
    </source>
</evidence>
<evidence type="ECO:0000269" key="14">
    <source>
    </source>
</evidence>
<evidence type="ECO:0000269" key="15">
    <source>
    </source>
</evidence>
<evidence type="ECO:0000269" key="16">
    <source>
    </source>
</evidence>
<evidence type="ECO:0000269" key="17">
    <source>
    </source>
</evidence>
<evidence type="ECO:0000269" key="18">
    <source>
    </source>
</evidence>
<evidence type="ECO:0000269" key="19">
    <source>
    </source>
</evidence>
<evidence type="ECO:0000303" key="20">
    <source>
    </source>
</evidence>
<evidence type="ECO:0000303" key="21">
    <source>
    </source>
</evidence>
<evidence type="ECO:0000303" key="22">
    <source>
    </source>
</evidence>
<evidence type="ECO:0000303" key="23">
    <source>
    </source>
</evidence>
<evidence type="ECO:0000303" key="24">
    <source ref="6"/>
</evidence>
<evidence type="ECO:0000305" key="25"/>
<evidence type="ECO:0000305" key="26">
    <source>
    </source>
</evidence>
<evidence type="ECO:0000305" key="27">
    <source>
    </source>
</evidence>
<evidence type="ECO:0000305" key="28">
    <source>
    </source>
</evidence>
<evidence type="ECO:0000305" key="29">
    <source>
    </source>
</evidence>
<evidence type="ECO:0007744" key="30">
    <source>
    </source>
</evidence>
<evidence type="ECO:0007744" key="31">
    <source>
    </source>
</evidence>
<evidence type="ECO:0007744" key="32">
    <source>
    </source>
</evidence>
<proteinExistence type="evidence at protein level"/>
<reference key="1">
    <citation type="journal article" date="1998" name="J. Natl. Cancer Inst.">
        <title>Characterization of MOAT-C and MOAT-D, new members of the MRP/cMOAT subfamily of transporter proteins.</title>
        <authorList>
            <person name="Belinsky M.G."/>
            <person name="Bain L.J."/>
            <person name="Balsara B.B."/>
            <person name="Testa J.R."/>
            <person name="Kruh G.D."/>
        </authorList>
    </citation>
    <scope>NUCLEOTIDE SEQUENCE [MRNA] (ISOFORM 1)</scope>
    <scope>TISSUE SPECIFICITY</scope>
</reference>
<reference key="2">
    <citation type="journal article" date="1999" name="J. Biol. Chem.">
        <title>pABC11 (also known as MOAT-C and MRP5), a member of the ABC family of proteins, has anion transporter activity but does not confer multidrug resistance when overexpressed in human embryonic kidney 293 cells.</title>
        <authorList>
            <person name="McAleer M.A."/>
            <person name="Breen M.A."/>
            <person name="White N.L."/>
            <person name="Matthews N."/>
        </authorList>
    </citation>
    <scope>NUCLEOTIDE SEQUENCE [MRNA] (ISOFORM 1)</scope>
    <scope>TISSUE SPECIFICITY</scope>
    <source>
        <tissue>Brain</tissue>
    </source>
</reference>
<reference key="3">
    <citation type="journal article" date="2000" name="Gene">
        <title>Detailed structural analysis on both human MRP5 and mouse mrp5 transcripts.</title>
        <authorList>
            <person name="Suzuki T."/>
            <person name="Sasaki H."/>
            <person name="Kuh H.J."/>
            <person name="Agui M."/>
            <person name="Tatsumi Y."/>
            <person name="Tanabe S."/>
            <person name="Terada M."/>
            <person name="Saijo N."/>
            <person name="Nishio K."/>
        </authorList>
    </citation>
    <scope>NUCLEOTIDE SEQUENCE [MRNA] (ISOFORM 1)</scope>
</reference>
<reference key="4">
    <citation type="journal article" date="2000" name="Proc. Natl. Acad. Sci. U.S.A.">
        <title>Multidrug-resistance protein 5 is a multispecific organic anion transporter able to transport nucleotide analogs.</title>
        <authorList>
            <person name="Wijnholds J."/>
            <person name="Mol C.A.A.M."/>
            <person name="van Deemter L."/>
            <person name="de Haas M."/>
            <person name="Scheffer G.L."/>
            <person name="Baas F."/>
            <person name="Beijnen J.H."/>
            <person name="Scheper R.J."/>
            <person name="Hatse S."/>
            <person name="De Clercq E."/>
            <person name="Balzarini J."/>
            <person name="Borst P."/>
        </authorList>
    </citation>
    <scope>NUCLEOTIDE SEQUENCE [MRNA] (ISOFORM 1)</scope>
    <scope>FUNCTION</scope>
    <scope>CATALYTIC ACTIVITY</scope>
    <source>
        <tissue>Brain</tissue>
        <tissue>Ovarian carcinoma</tissue>
    </source>
</reference>
<reference key="5">
    <citation type="journal article" date="2007" name="BMC Mol. Biol.">
        <title>Three novel ABCC5 splice variants in human retina and their role as regulators of ABCC5 gene expression.</title>
        <authorList>
            <person name="Stojic J."/>
            <person name="Stohr H."/>
            <person name="Weber B.H."/>
        </authorList>
    </citation>
    <scope>NUCLEOTIDE SEQUENCE [MRNA] (ISOFORMS 2; 3 AND 4)</scope>
    <scope>TISSUE SPECIFICITY</scope>
    <scope>ALTERNATIVE SPLICING</scope>
    <source>
        <tissue>Retina</tissue>
    </source>
</reference>
<reference key="6">
    <citation type="submission" date="2002-12" db="EMBL/GenBank/DDBJ databases">
        <authorList>
            <person name="Ito T."/>
            <person name="Kato R."/>
            <person name="Ishikawa T."/>
        </authorList>
    </citation>
    <scope>NUCLEOTIDE SEQUENCE [MRNA] (ISOFORM 5)</scope>
    <source>
        <tissue>Skeletal muscle</tissue>
    </source>
</reference>
<reference key="7">
    <citation type="journal article" date="2006" name="Nature">
        <title>The DNA sequence, annotation and analysis of human chromosome 3.</title>
        <authorList>
            <person name="Muzny D.M."/>
            <person name="Scherer S.E."/>
            <person name="Kaul R."/>
            <person name="Wang J."/>
            <person name="Yu J."/>
            <person name="Sudbrak R."/>
            <person name="Buhay C.J."/>
            <person name="Chen R."/>
            <person name="Cree A."/>
            <person name="Ding Y."/>
            <person name="Dugan-Rocha S."/>
            <person name="Gill R."/>
            <person name="Gunaratne P."/>
            <person name="Harris R.A."/>
            <person name="Hawes A.C."/>
            <person name="Hernandez J."/>
            <person name="Hodgson A.V."/>
            <person name="Hume J."/>
            <person name="Jackson A."/>
            <person name="Khan Z.M."/>
            <person name="Kovar-Smith C."/>
            <person name="Lewis L.R."/>
            <person name="Lozado R.J."/>
            <person name="Metzker M.L."/>
            <person name="Milosavljevic A."/>
            <person name="Miner G.R."/>
            <person name="Morgan M.B."/>
            <person name="Nazareth L.V."/>
            <person name="Scott G."/>
            <person name="Sodergren E."/>
            <person name="Song X.-Z."/>
            <person name="Steffen D."/>
            <person name="Wei S."/>
            <person name="Wheeler D.A."/>
            <person name="Wright M.W."/>
            <person name="Worley K.C."/>
            <person name="Yuan Y."/>
            <person name="Zhang Z."/>
            <person name="Adams C.Q."/>
            <person name="Ansari-Lari M.A."/>
            <person name="Ayele M."/>
            <person name="Brown M.J."/>
            <person name="Chen G."/>
            <person name="Chen Z."/>
            <person name="Clendenning J."/>
            <person name="Clerc-Blankenburg K.P."/>
            <person name="Chen R."/>
            <person name="Chen Z."/>
            <person name="Davis C."/>
            <person name="Delgado O."/>
            <person name="Dinh H.H."/>
            <person name="Dong W."/>
            <person name="Draper H."/>
            <person name="Ernst S."/>
            <person name="Fu G."/>
            <person name="Gonzalez-Garay M.L."/>
            <person name="Garcia D.K."/>
            <person name="Gillett W."/>
            <person name="Gu J."/>
            <person name="Hao B."/>
            <person name="Haugen E."/>
            <person name="Havlak P."/>
            <person name="He X."/>
            <person name="Hennig S."/>
            <person name="Hu S."/>
            <person name="Huang W."/>
            <person name="Jackson L.R."/>
            <person name="Jacob L.S."/>
            <person name="Kelly S.H."/>
            <person name="Kube M."/>
            <person name="Levy R."/>
            <person name="Li Z."/>
            <person name="Liu B."/>
            <person name="Liu J."/>
            <person name="Liu W."/>
            <person name="Lu J."/>
            <person name="Maheshwari M."/>
            <person name="Nguyen B.-V."/>
            <person name="Okwuonu G.O."/>
            <person name="Palmeiri A."/>
            <person name="Pasternak S."/>
            <person name="Perez L.M."/>
            <person name="Phelps K.A."/>
            <person name="Plopper F.J."/>
            <person name="Qiang B."/>
            <person name="Raymond C."/>
            <person name="Rodriguez R."/>
            <person name="Saenphimmachak C."/>
            <person name="Santibanez J."/>
            <person name="Shen H."/>
            <person name="Shen Y."/>
            <person name="Subramanian S."/>
            <person name="Tabor P.E."/>
            <person name="Verduzco D."/>
            <person name="Waldron L."/>
            <person name="Wang J."/>
            <person name="Wang J."/>
            <person name="Wang Q."/>
            <person name="Williams G.A."/>
            <person name="Wong G.K.-S."/>
            <person name="Yao Z."/>
            <person name="Zhang J."/>
            <person name="Zhang X."/>
            <person name="Zhao G."/>
            <person name="Zhou J."/>
            <person name="Zhou Y."/>
            <person name="Nelson D."/>
            <person name="Lehrach H."/>
            <person name="Reinhardt R."/>
            <person name="Naylor S.L."/>
            <person name="Yang H."/>
            <person name="Olson M."/>
            <person name="Weinstock G."/>
            <person name="Gibbs R.A."/>
        </authorList>
    </citation>
    <scope>NUCLEOTIDE SEQUENCE [LARGE SCALE GENOMIC DNA]</scope>
</reference>
<reference key="8">
    <citation type="submission" date="2005-09" db="EMBL/GenBank/DDBJ databases">
        <authorList>
            <person name="Mural R.J."/>
            <person name="Istrail S."/>
            <person name="Sutton G.G."/>
            <person name="Florea L."/>
            <person name="Halpern A.L."/>
            <person name="Mobarry C.M."/>
            <person name="Lippert R."/>
            <person name="Walenz B."/>
            <person name="Shatkay H."/>
            <person name="Dew I."/>
            <person name="Miller J.R."/>
            <person name="Flanigan M.J."/>
            <person name="Edwards N.J."/>
            <person name="Bolanos R."/>
            <person name="Fasulo D."/>
            <person name="Halldorsson B.V."/>
            <person name="Hannenhalli S."/>
            <person name="Turner R."/>
            <person name="Yooseph S."/>
            <person name="Lu F."/>
            <person name="Nusskern D.R."/>
            <person name="Shue B.C."/>
            <person name="Zheng X.H."/>
            <person name="Zhong F."/>
            <person name="Delcher A.L."/>
            <person name="Huson D.H."/>
            <person name="Kravitz S.A."/>
            <person name="Mouchard L."/>
            <person name="Reinert K."/>
            <person name="Remington K.A."/>
            <person name="Clark A.G."/>
            <person name="Waterman M.S."/>
            <person name="Eichler E.E."/>
            <person name="Adams M.D."/>
            <person name="Hunkapiller M.W."/>
            <person name="Myers E.W."/>
            <person name="Venter J.C."/>
        </authorList>
    </citation>
    <scope>NUCLEOTIDE SEQUENCE [LARGE SCALE GENOMIC DNA]</scope>
</reference>
<reference key="9">
    <citation type="journal article" date="2004" name="Genome Res.">
        <title>The status, quality, and expansion of the NIH full-length cDNA project: the Mammalian Gene Collection (MGC).</title>
        <authorList>
            <consortium name="The MGC Project Team"/>
        </authorList>
    </citation>
    <scope>NUCLEOTIDE SEQUENCE [LARGE SCALE MRNA] (ISOFORMS 1 AND 2)</scope>
    <source>
        <tissue>Brain</tissue>
        <tissue>Pancreas</tissue>
    </source>
</reference>
<reference key="10">
    <citation type="journal article" date="1997" name="Biochem. Biophys. Res. Commun.">
        <title>cDNA cloning of a short type of multidrug resistance protein homologue, SMRP, from a human lung cancer cell line.</title>
        <authorList>
            <person name="Suzuki T."/>
            <person name="Nishio K."/>
            <person name="Sasaki H."/>
            <person name="Kurokawa H."/>
            <person name="Saito-Ohara F."/>
            <person name="Ikeuch T."/>
            <person name="Tanabe S."/>
            <person name="Terada M."/>
            <person name="Saijo N."/>
        </authorList>
    </citation>
    <scope>NUCLEOTIDE SEQUENCE [MRNA] OF 492-1437 (ISOFORM 1)</scope>
    <source>
        <tissue>Bone marrow</tissue>
    </source>
</reference>
<reference key="11">
    <citation type="journal article" date="1997" name="Cancer Res.">
        <title>Analysis of expression of cMOAT (MRP2), MRP3, MRP4, and MRP5, homologues of the multidrug resistance-associated protein gene (MRP1), in human cancer cell lines.</title>
        <authorList>
            <person name="Kool M."/>
            <person name="de Haas M."/>
            <person name="Scheffer G.L."/>
            <person name="Scheper R.J."/>
            <person name="van Eijk M.J."/>
            <person name="Juijn J.A."/>
            <person name="Baas F."/>
            <person name="Borst P."/>
        </authorList>
    </citation>
    <scope>NUCLEOTIDE SEQUENCE [MRNA] OF 1216-1437 (ISOFORM 1)</scope>
    <source>
        <tissue>Brain</tissue>
    </source>
</reference>
<reference key="12">
    <citation type="journal article" date="2000" name="J. Biol. Chem.">
        <title>The multidrug resistance protein 5 functions as an ATP-dependent export pump for cyclic nucleotides.</title>
        <authorList>
            <person name="Jedlitschky G."/>
            <person name="Burchell B."/>
            <person name="Keppler D."/>
        </authorList>
    </citation>
    <scope>FUNCTION</scope>
    <scope>CATALYTIC ACTIVITY</scope>
    <scope>BIOPHYSICOCHEMICAL PROPERTIES</scope>
    <scope>ACTIVITY REGULATION</scope>
</reference>
<reference key="13">
    <citation type="journal article" date="2002" name="Mol. Pharmacol.">
        <title>Thiopurine metabolism and identification of the thiopurine metabolites transported by MRP4 and MRP5 overexpressed in human embryonic kidney cells.</title>
        <authorList>
            <person name="Wielinga P.R."/>
            <person name="Reid G."/>
            <person name="Challa E.E."/>
            <person name="van der Heijden I."/>
            <person name="van Deemter L."/>
            <person name="de Haas M."/>
            <person name="Mol C."/>
            <person name="Kuil A.J."/>
            <person name="Groeneveld E."/>
            <person name="Schuetz J.D."/>
            <person name="Brouwer C."/>
            <person name="De Abreu R.A."/>
            <person name="Wijnholds J."/>
            <person name="Beijnen J.H."/>
            <person name="Borst P."/>
        </authorList>
    </citation>
    <scope>FUNCTION</scope>
    <scope>CATALYTIC ACTIVITY</scope>
</reference>
<reference key="14">
    <citation type="journal article" date="2003" name="Mol. Pharmacol.">
        <title>Characterization of the transport of nucleoside analog drugs by the human multidrug resistance proteins MRP4 and MRP5.</title>
        <authorList>
            <person name="Reid G."/>
            <person name="Wielinga P."/>
            <person name="Zelcer N."/>
            <person name="De Haas M."/>
            <person name="Van Deemter L."/>
            <person name="Wijnholds J."/>
            <person name="Balzarini J."/>
            <person name="Borst P."/>
        </authorList>
    </citation>
    <scope>CATALYTIC ACTIVITY</scope>
    <scope>FUNCTION</scope>
</reference>
<reference key="15">
    <citation type="journal article" date="2003" name="J. Biol. Chem.">
        <title>Characterization of the MRP4- and MRP5-mediated transport of cyclic nucleotides from intact cells.</title>
        <authorList>
            <person name="Wielinga P.R."/>
            <person name="van der Heijden I."/>
            <person name="Reid G."/>
            <person name="Beijnen J.H."/>
            <person name="Wijnholds J."/>
            <person name="Borst P."/>
        </authorList>
    </citation>
    <scope>FUNCTION</scope>
    <scope>CATALYTIC ACTIVITY</scope>
</reference>
<reference key="16">
    <citation type="journal article" date="2004" name="Neuroscience">
        <title>Expression and immunolocalization of the multidrug resistance proteins, MRP1-MRP6 (ABCC1-ABCC6), in human brain.</title>
        <authorList>
            <person name="Nies A.T."/>
            <person name="Jedlitschky G."/>
            <person name="Koenig J."/>
            <person name="Herold-Mende C."/>
            <person name="Steiner H.H."/>
            <person name="Schmitt H.P."/>
            <person name="Keppler D."/>
        </authorList>
    </citation>
    <scope>SUBCELLULAR LOCATION</scope>
    <scope>TISSUE SPECIFICITY</scope>
</reference>
<reference key="17">
    <citation type="journal article" date="2005" name="Cancer Res.">
        <title>The human multidrug resistance protein MRP5 transports folates and can mediate cellular resistance against antifolates.</title>
        <authorList>
            <person name="Wielinga P."/>
            <person name="Hooijberg J.H."/>
            <person name="Gunnarsdottir S."/>
            <person name="Kathmann I."/>
            <person name="Reid G."/>
            <person name="Zelcer N."/>
            <person name="van der Born K."/>
            <person name="de Haas M."/>
            <person name="van der Heijden I."/>
            <person name="Kaspers G."/>
            <person name="Wijnholds J."/>
            <person name="Jansen G."/>
            <person name="Peters G."/>
            <person name="Borst P."/>
        </authorList>
    </citation>
    <scope>FUNCTION</scope>
    <scope>CATALYTIC ACTIVITY</scope>
    <scope>BIOPHYSICOCHEMICAL PROPERTIES</scope>
</reference>
<reference key="18">
    <citation type="journal article" date="2007" name="FEBS J.">
        <title>cGMP transport by vesicles from human and mouse erythrocytes.</title>
        <authorList>
            <person name="de Wolf C.J."/>
            <person name="Yamaguchi H."/>
            <person name="van der Heijden I."/>
            <person name="Wielinga P.R."/>
            <person name="Hundscheid S.L."/>
            <person name="Ono N."/>
            <person name="Scheffer G.L."/>
            <person name="de Haas M."/>
            <person name="Schuetz J.D."/>
            <person name="Wijnholds J."/>
            <person name="Borst P."/>
        </authorList>
    </citation>
    <scope>FUNCTION</scope>
    <scope>CATALYTIC ACTIVITY</scope>
    <scope>BIOPHYSICOCHEMICAL PROPERTIES</scope>
</reference>
<reference key="19">
    <citation type="journal article" date="2008" name="Proc. Natl. Acad. Sci. U.S.A.">
        <title>A quantitative atlas of mitotic phosphorylation.</title>
        <authorList>
            <person name="Dephoure N."/>
            <person name="Zhou C."/>
            <person name="Villen J."/>
            <person name="Beausoleil S.A."/>
            <person name="Bakalarski C.E."/>
            <person name="Elledge S.J."/>
            <person name="Gygi S.P."/>
        </authorList>
    </citation>
    <scope>PHOSPHORYLATION [LARGE SCALE ANALYSIS] AT SER-509 AND THR-513</scope>
    <scope>IDENTIFICATION BY MASS SPECTROMETRY [LARGE SCALE ANALYSIS]</scope>
    <source>
        <tissue>Cervix carcinoma</tissue>
    </source>
</reference>
<reference key="20">
    <citation type="journal article" date="2010" name="Sci. Signal.">
        <title>Quantitative phosphoproteomics reveals widespread full phosphorylation site occupancy during mitosis.</title>
        <authorList>
            <person name="Olsen J.V."/>
            <person name="Vermeulen M."/>
            <person name="Santamaria A."/>
            <person name="Kumar C."/>
            <person name="Miller M.L."/>
            <person name="Jensen L.J."/>
            <person name="Gnad F."/>
            <person name="Cox J."/>
            <person name="Jensen T.S."/>
            <person name="Nigg E.A."/>
            <person name="Brunak S."/>
            <person name="Mann M."/>
        </authorList>
    </citation>
    <scope>PHOSPHORYLATION [LARGE SCALE ANALYSIS] AT SER-509</scope>
    <scope>IDENTIFICATION BY MASS SPECTROMETRY [LARGE SCALE ANALYSIS]</scope>
    <source>
        <tissue>Cervix carcinoma</tissue>
    </source>
</reference>
<reference key="21">
    <citation type="journal article" date="2013" name="J. Proteome Res.">
        <title>Toward a comprehensive characterization of a human cancer cell phosphoproteome.</title>
        <authorList>
            <person name="Zhou H."/>
            <person name="Di Palma S."/>
            <person name="Preisinger C."/>
            <person name="Peng M."/>
            <person name="Polat A.N."/>
            <person name="Heck A.J."/>
            <person name="Mohammed S."/>
        </authorList>
    </citation>
    <scope>PHOSPHORYLATION [LARGE SCALE ANALYSIS] AT SER-14; SER-19; SER-60; SER-505 AND SER-509</scope>
    <scope>IDENTIFICATION BY MASS SPECTROMETRY [LARGE SCALE ANALYSIS]</scope>
    <source>
        <tissue>Cervix carcinoma</tissue>
        <tissue>Erythroleukemia</tissue>
    </source>
</reference>
<reference key="22">
    <citation type="journal article" date="2014" name="Cell Metab.">
        <title>Control of metazoan heme homeostasis by a conserved multidrug resistance protein.</title>
        <authorList>
            <person name="Korolnek T."/>
            <person name="Zhang J."/>
            <person name="Beardsley S."/>
            <person name="Scheffer G.L."/>
            <person name="Hamza I."/>
        </authorList>
    </citation>
    <scope>FUNCTION</scope>
    <scope>SUBCELLULAR LOCATION</scope>
</reference>
<reference key="23">
    <citation type="journal article" date="2015" name="J. Biol. Chem.">
        <title>ATP-binding Cassette Subfamily C Member 5 (ABCC5) Functions as an Efflux Transporter of Glutamate Conjugates and Analogs.</title>
        <authorList>
            <person name="Jansen R.S."/>
            <person name="Mahakena S."/>
            <person name="de Haas M."/>
            <person name="Borst P."/>
            <person name="van de Wetering K."/>
        </authorList>
    </citation>
    <scope>CATALYTIC ACTIVITY</scope>
    <scope>FUNCTION</scope>
    <scope>BIOPHYSICOCHEMICAL PROPERTIES</scope>
</reference>
<reference key="24">
    <citation type="journal article" date="2015" name="Proc. Natl. Acad. Sci. U.S.A.">
        <title>N-lactoyl-amino acids are ubiquitous metabolites that originate from CNDP2-mediated reverse proteolysis of lactate and amino acids.</title>
        <authorList>
            <person name="Jansen R.S."/>
            <person name="Addie R."/>
            <person name="Merkx R."/>
            <person name="Fish A."/>
            <person name="Mahakena S."/>
            <person name="Bleijerveld O.B."/>
            <person name="Altelaar M."/>
            <person name="Ijlst L."/>
            <person name="Wanders R.J."/>
            <person name="Borst P."/>
            <person name="van de Wetering K."/>
        </authorList>
    </citation>
    <scope>FUNCTION</scope>
    <scope>CATALYTIC ACTIVITY</scope>
    <scope>BIOPHYSICOCHEMICAL PROPERTIES</scope>
</reference>
<keyword id="KW-0002">3D-structure</keyword>
<keyword id="KW-0025">Alternative splicing</keyword>
<keyword id="KW-0067">ATP-binding</keyword>
<keyword id="KW-1003">Cell membrane</keyword>
<keyword id="KW-0967">Endosome</keyword>
<keyword id="KW-0325">Glycoprotein</keyword>
<keyword id="KW-0333">Golgi apparatus</keyword>
<keyword id="KW-0472">Membrane</keyword>
<keyword id="KW-0547">Nucleotide-binding</keyword>
<keyword id="KW-0597">Phosphoprotein</keyword>
<keyword id="KW-1267">Proteomics identification</keyword>
<keyword id="KW-1185">Reference proteome</keyword>
<keyword id="KW-0677">Repeat</keyword>
<keyword id="KW-1278">Translocase</keyword>
<keyword id="KW-0812">Transmembrane</keyword>
<keyword id="KW-1133">Transmembrane helix</keyword>
<keyword id="KW-0813">Transport</keyword>
<sequence>MKDIDIGKEYIIPSPGYRSVRERTSTSGTHRDREDSKFRRTRPLECQDALETAARAEGLSLDASMHSQLRILDEEHPKGKYHHGLSALKPIRTTSKHQHPVDNAGLFSCMTFSWLSSLARVAHKKGELSMEDVWSLSKHESSDVNCRRLERLWQEELNEVGPDAASLRRVVWIFCRTRLILSIVCLMITQLAGFSGPAFMVKHLLEYTQATESNLQYSLLLVLGLLLTEIVRSWSLALTWALNYRTGVRLRGAILTMAFKKILKLKNIKEKSLGELINICSNDGQRMFEAAAVGSLLAGGPVVAILGMIYNVIILGPTGFLGSAVFILFYPAMMFASRLTAYFRRKCVAATDERVQKMNEVLTYIKFIKMYAWVKAFSQSVQKIREEERRILEKAGYFQSITVGVAPIVVVIASVVTFSVHMTLGFDLTAAQAFTVVTVFNSMTFALKVTPFSVKSLSEASVAVDRFKSLFLMEEVHMIKNKPASPHIKIEMKNATLAWDSSHSSIQNSPKLTPKMKKDKRASRGKKEKVRQLQRTEHQAVLAEQKGHLLLDSDERPSPEEEEGKHIHLGHLRLQRTLHSIDLEIQEGKLVGICGSVGSGKTSLISAILGQMTLLEGSIAISGTFAYVAQQAWILNATLRDNILFGKEYDEERYNSVLNSCCLRPDLAILPSSDLTEIGERGANLSGGQRQRISLARALYSDRSIYILDDPLSALDAHVGNHIFNSAIRKHLKSKTVLFVTHQLQYLVDCDEVIFMKEGCITERGTHEELMNLNGDYATIFNNLLLGETPPVEINSKKETSGSQKKSQDKGPKTGSVKKEKAVKPEEGQLVQLEEKGQGSVPWSVYGVYIQAAGGPLAFLVIMALFMLNVGSTAFSTWWLSYWIKQGSGNTTVTRGNETSVSDSMKDNPHMQYYASIYALSMAVMLILKAIRGVVFVKGTLRASSRLHDELFRRILRSPMKFFDTTPTGRILNRFSKDMDEVDVRLPFQAEMFIQNVILVFFCVGMIAGVFPWFLVAVGPLVILFSVLHIVSRVLIRELKRLDNITQSPFLSHITSSIQGLATIHAYNKGQEFLHRYQELLDDNQAPFFLFTCAMRWLAVRLDLISIALITTTGLMIVLMHGQIPPAYAGLAISYAVQLTGLFQFTVRLASETEARFTSVERINHYIKTLSLEAPARIKNKAPSPDWPQEGEVTFENAEMRYRENLPLVLKKVSFTIKPKEKIGIVGRTGSGKSSLGMALFRLVELSGGCIKIDGVRISDIGLADLRSKLSIIPQEPVLFSGTVRSNLDPFNQYTEDQIWDALERTHMKECIAQLPLKLESEVMENGDNFSVGERQLLCIARALLRHCKILILDEATAAMDTETDLLIQETIREAFADCTMLTIAHRLHTVLGSDRIMVLAQGQVVEFDTPSVLLSNDSSRFYAMFAAAENKVAVKG</sequence>
<comment type="function">
    <text evidence="1 7 8 9 10 11 13 14 16 17 18">ATP-dependent transporter of the ATP-binding cassette (ABC) family that actively extrudes physiological compounds, and xenobiotics from cells. Mediates ATP-dependent transport of endogenous metabolites such as cAMP and cGMP, folic acid and N-lactoyl-amino acids (in vitro) (PubMed:10893247, PubMed:12637526, PubMed:12695538, PubMed:15899835, PubMed:17229149, PubMed:25964343). Also acts as a general glutamate conjugate and analog transporter that can limit the brain levels of endogenous metabolites, drugs, and toxins (PubMed:26515061). Confers resistance to the antiviral agent PMEA (PubMed:12695538). Able to transport several anticancer drugs including methotrexate, and nucleotide analogs in vitro, however it does with low affinity, thus the exact role of ABCC5 in mediating resistance still needs to be elucidated (PubMed:10840050, PubMed:12435799, PubMed:12695538, PubMed:15899835). Acts as a heme transporter required for the translocation of cytosolic heme to the secretory pathway (PubMed:24836561). May play a role in energy metabolism by regulating the glucagon-like peptide 1 (GLP-1) secretion from enteroendocrine cells (By similarity).</text>
</comment>
<comment type="catalytic activity">
    <reaction evidence="7 9 11 13">
        <text>ATP + H2O + xenobioticSide 1 = ADP + phosphate + xenobioticSide 2.</text>
        <dbReference type="EC" id="7.6.2.2"/>
    </reaction>
</comment>
<comment type="catalytic activity">
    <reaction evidence="8 10 11">
        <text>3',5'-cyclic GMP(in) + ATP + H2O = 3',5'-cyclic GMP(out) + ADP + phosphate + H(+)</text>
        <dbReference type="Rhea" id="RHEA:66188"/>
        <dbReference type="ChEBI" id="CHEBI:15377"/>
        <dbReference type="ChEBI" id="CHEBI:15378"/>
        <dbReference type="ChEBI" id="CHEBI:30616"/>
        <dbReference type="ChEBI" id="CHEBI:43474"/>
        <dbReference type="ChEBI" id="CHEBI:57746"/>
        <dbReference type="ChEBI" id="CHEBI:456216"/>
    </reaction>
    <physiologicalReaction direction="left-to-right" evidence="26">
        <dbReference type="Rhea" id="RHEA:66189"/>
    </physiologicalReaction>
</comment>
<comment type="catalytic activity">
    <reaction evidence="8 10 11">
        <text>3',5'-cyclic AMP(in) + ATP + H2O = 3',5'-cyclic AMP(out) + ADP + phosphate + H(+)</text>
        <dbReference type="Rhea" id="RHEA:66184"/>
        <dbReference type="ChEBI" id="CHEBI:15377"/>
        <dbReference type="ChEBI" id="CHEBI:15378"/>
        <dbReference type="ChEBI" id="CHEBI:30616"/>
        <dbReference type="ChEBI" id="CHEBI:43474"/>
        <dbReference type="ChEBI" id="CHEBI:58165"/>
        <dbReference type="ChEBI" id="CHEBI:456216"/>
    </reaction>
    <physiologicalReaction direction="left-to-right" evidence="26">
        <dbReference type="Rhea" id="RHEA:66185"/>
    </physiologicalReaction>
</comment>
<comment type="catalytic activity">
    <reaction evidence="18">
        <text>N-acetyl-L-aspartyl-L-glutamate(in) + ATP + H2O = N-acetyl-L-aspartyl-L-glutamate(out) + ADP + phosphate + H(+)</text>
        <dbReference type="Rhea" id="RHEA:66728"/>
        <dbReference type="ChEBI" id="CHEBI:15377"/>
        <dbReference type="ChEBI" id="CHEBI:15378"/>
        <dbReference type="ChEBI" id="CHEBI:30616"/>
        <dbReference type="ChEBI" id="CHEBI:43474"/>
        <dbReference type="ChEBI" id="CHEBI:76931"/>
        <dbReference type="ChEBI" id="CHEBI:456216"/>
    </reaction>
    <physiologicalReaction direction="left-to-right" evidence="29">
        <dbReference type="Rhea" id="RHEA:66729"/>
    </physiologicalReaction>
</comment>
<comment type="catalytic activity">
    <reaction evidence="18">
        <text>N-acetyl-L-aspartyl-L-glutamyl-L-glutamate(in) + ATP + H2O = N-acetyl-L-aspartyl-L-glutamyl-L-glutamate(out) + ADP + phosphate + H(+)</text>
        <dbReference type="Rhea" id="RHEA:66732"/>
        <dbReference type="ChEBI" id="CHEBI:15377"/>
        <dbReference type="ChEBI" id="CHEBI:15378"/>
        <dbReference type="ChEBI" id="CHEBI:30616"/>
        <dbReference type="ChEBI" id="CHEBI:43474"/>
        <dbReference type="ChEBI" id="CHEBI:76935"/>
        <dbReference type="ChEBI" id="CHEBI:456216"/>
    </reaction>
    <physiologicalReaction direction="left-to-right" evidence="29">
        <dbReference type="Rhea" id="RHEA:66733"/>
    </physiologicalReaction>
</comment>
<comment type="catalytic activity">
    <reaction evidence="18">
        <text>N-acetyl-L-glutamate(in) + ATP + H2O = N-acetyl-L-glutamate(out) + ADP + phosphate + H(+)</text>
        <dbReference type="Rhea" id="RHEA:66740"/>
        <dbReference type="ChEBI" id="CHEBI:15377"/>
        <dbReference type="ChEBI" id="CHEBI:15378"/>
        <dbReference type="ChEBI" id="CHEBI:30616"/>
        <dbReference type="ChEBI" id="CHEBI:43474"/>
        <dbReference type="ChEBI" id="CHEBI:44337"/>
        <dbReference type="ChEBI" id="CHEBI:456216"/>
    </reaction>
    <physiologicalReaction direction="left-to-right" evidence="29">
        <dbReference type="Rhea" id="RHEA:66741"/>
    </physiologicalReaction>
</comment>
<comment type="catalytic activity">
    <reaction evidence="18">
        <text>N-acetyl-L-aspartate(in) + ATP + H2O = N-acetyl-L-aspartate(out) + ADP + phosphate + H(+)</text>
        <dbReference type="Rhea" id="RHEA:66744"/>
        <dbReference type="ChEBI" id="CHEBI:15377"/>
        <dbReference type="ChEBI" id="CHEBI:15378"/>
        <dbReference type="ChEBI" id="CHEBI:16953"/>
        <dbReference type="ChEBI" id="CHEBI:30616"/>
        <dbReference type="ChEBI" id="CHEBI:43474"/>
        <dbReference type="ChEBI" id="CHEBI:456216"/>
    </reaction>
    <physiologicalReaction direction="left-to-right" evidence="29">
        <dbReference type="Rhea" id="RHEA:66745"/>
    </physiologicalReaction>
</comment>
<comment type="catalytic activity">
    <reaction evidence="18">
        <text>(2S)-2-[5-amino-1-(beta-D-ribosyl)imidazole-4-carboxamido]succinate(in) + ATP + H2O = (2S)-2-[5-amino-1-(beta-D-ribosyl)imidazole-4-carboxamido]succinate(out) + ADP + phosphate + H(+)</text>
        <dbReference type="Rhea" id="RHEA:66752"/>
        <dbReference type="ChEBI" id="CHEBI:15377"/>
        <dbReference type="ChEBI" id="CHEBI:15378"/>
        <dbReference type="ChEBI" id="CHEBI:30616"/>
        <dbReference type="ChEBI" id="CHEBI:43474"/>
        <dbReference type="ChEBI" id="CHEBI:167466"/>
        <dbReference type="ChEBI" id="CHEBI:456216"/>
    </reaction>
    <physiologicalReaction direction="left-to-right" evidence="29">
        <dbReference type="Rhea" id="RHEA:66753"/>
    </physiologicalReaction>
</comment>
<comment type="catalytic activity">
    <reaction evidence="18">
        <text>domoate(in) + ATP + H2O = domoate(out) + ADP + phosphate + H(+)</text>
        <dbReference type="Rhea" id="RHEA:66756"/>
        <dbReference type="ChEBI" id="CHEBI:15377"/>
        <dbReference type="ChEBI" id="CHEBI:15378"/>
        <dbReference type="ChEBI" id="CHEBI:30616"/>
        <dbReference type="ChEBI" id="CHEBI:43474"/>
        <dbReference type="ChEBI" id="CHEBI:167470"/>
        <dbReference type="ChEBI" id="CHEBI:456216"/>
    </reaction>
    <physiologicalReaction direction="left-to-right" evidence="29">
        <dbReference type="Rhea" id="RHEA:66757"/>
    </physiologicalReaction>
</comment>
<comment type="catalytic activity">
    <reaction evidence="18">
        <text>beta-citrylglutamate(in) + ATP + H2O = beta-citrylglutamate(out) + ADP + phosphate + H(+)</text>
        <dbReference type="Rhea" id="RHEA:66736"/>
        <dbReference type="ChEBI" id="CHEBI:15377"/>
        <dbReference type="ChEBI" id="CHEBI:15378"/>
        <dbReference type="ChEBI" id="CHEBI:30616"/>
        <dbReference type="ChEBI" id="CHEBI:43474"/>
        <dbReference type="ChEBI" id="CHEBI:76942"/>
        <dbReference type="ChEBI" id="CHEBI:456216"/>
    </reaction>
    <physiologicalReaction direction="left-to-right" evidence="29">
        <dbReference type="Rhea" id="RHEA:66737"/>
    </physiologicalReaction>
</comment>
<comment type="catalytic activity">
    <reaction evidence="18">
        <text>kainate(in) + ATP + H2O = kainate(out) + ADP + phosphate + H(+)</text>
        <dbReference type="Rhea" id="RHEA:66760"/>
        <dbReference type="ChEBI" id="CHEBI:15377"/>
        <dbReference type="ChEBI" id="CHEBI:15378"/>
        <dbReference type="ChEBI" id="CHEBI:30616"/>
        <dbReference type="ChEBI" id="CHEBI:43474"/>
        <dbReference type="ChEBI" id="CHEBI:156548"/>
        <dbReference type="ChEBI" id="CHEBI:456216"/>
    </reaction>
    <physiologicalReaction direction="left-to-right" evidence="29">
        <dbReference type="Rhea" id="RHEA:66761"/>
    </physiologicalReaction>
</comment>
<comment type="catalytic activity">
    <reaction evidence="17">
        <text>N-[(S)-lactoyl]-L-phenylalanine(in) + ATP + H2O = N-[(S)-lactoyl]-L-phenylalanine(out) + ADP + phosphate + H(+)</text>
        <dbReference type="Rhea" id="RHEA:66720"/>
        <dbReference type="ChEBI" id="CHEBI:15377"/>
        <dbReference type="ChEBI" id="CHEBI:15378"/>
        <dbReference type="ChEBI" id="CHEBI:30616"/>
        <dbReference type="ChEBI" id="CHEBI:43474"/>
        <dbReference type="ChEBI" id="CHEBI:167456"/>
        <dbReference type="ChEBI" id="CHEBI:456216"/>
    </reaction>
    <physiologicalReaction direction="left-to-right" evidence="28">
        <dbReference type="Rhea" id="RHEA:66721"/>
    </physiologicalReaction>
</comment>
<comment type="catalytic activity">
    <reaction evidence="13">
        <text>folate(in) + ATP + H2O = folate(out) + ADP + phosphate + H(+)</text>
        <dbReference type="Rhea" id="RHEA:66764"/>
        <dbReference type="ChEBI" id="CHEBI:15377"/>
        <dbReference type="ChEBI" id="CHEBI:15378"/>
        <dbReference type="ChEBI" id="CHEBI:30616"/>
        <dbReference type="ChEBI" id="CHEBI:43474"/>
        <dbReference type="ChEBI" id="CHEBI:62501"/>
        <dbReference type="ChEBI" id="CHEBI:456216"/>
    </reaction>
    <physiologicalReaction direction="left-to-right" evidence="27">
        <dbReference type="Rhea" id="RHEA:66765"/>
    </physiologicalReaction>
</comment>
<comment type="activity regulation">
    <text evidence="8">cGMP transport is highly sensitive to inhibitors of cGMP phosphodiesterase, such as zaprinast, trequinsin and sildenafil.</text>
</comment>
<comment type="biophysicochemical properties">
    <kinetics>
        <KM evidence="8">379 uM for cAMP</KM>
        <KM evidence="8">2.1 uM for cGMP</KM>
        <KM evidence="14">132 uM for cGMP</KM>
        <KM evidence="13">1 mM for folate</KM>
        <KM evidence="17">1 mM for N-[(S)-lactoyl]-L-phenylalanine</KM>
        <KM evidence="18">1.9 mM for ZJ43 (glutamate analog)</KM>
        <KM evidence="18">3.5 mM for N-acetylaspartylglutamate (NAAG)</KM>
        <KM evidence="13">1.3 mM for methotrexate</KM>
        <Vmax evidence="13">780.0 pmol/min/mg enzyme for methotrexate transport</Vmax>
        <Vmax evidence="13">875.0 pmol/min/mg enzyme for folate transport</Vmax>
    </kinetics>
</comment>
<comment type="subcellular location">
    <subcellularLocation>
        <location evidence="16">Basolateral cell membrane</location>
        <topology evidence="2">Multi-pass membrane protein</topology>
    </subcellularLocation>
    <subcellularLocation>
        <location evidence="16">Golgi apparatus lumen</location>
    </subcellularLocation>
    <subcellularLocation>
        <location evidence="16">Endosome membrane</location>
    </subcellularLocation>
    <subcellularLocation>
        <location evidence="1">Cytoplasmic granule</location>
    </subcellularLocation>
    <subcellularLocation>
        <location evidence="12">Apical cell membrane</location>
        <topology evidence="2">Multi-pass membrane protein</topology>
    </subcellularLocation>
    <text evidence="12 16">In most cells, routes to the basolateral plasma membrane, but in the brain capillary endothelial cells that form the blood-brain barrier, resides in the apical membrane.</text>
</comment>
<comment type="alternative products">
    <event type="alternative splicing"/>
    <isoform>
        <id>O15440-1</id>
        <name>1</name>
        <sequence type="displayed"/>
    </isoform>
    <isoform>
        <id>O15440-2</id>
        <name>2</name>
        <name>SV1</name>
        <sequence type="described" ref="VSP_043397 VSP_043402"/>
    </isoform>
    <isoform>
        <id>O15440-3</id>
        <name>3</name>
        <name>SV2</name>
        <sequence type="described" ref="VSP_043398 VSP_043401 VSP_043402"/>
    </isoform>
    <isoform>
        <id>O15440-4</id>
        <name>4</name>
        <name>SV3</name>
        <sequence type="described" ref="VSP_043399 VSP_043400 VSP_043402"/>
    </isoform>
    <isoform>
        <id>O15440-5</id>
        <name>5</name>
        <sequence type="described" ref="VSP_055354"/>
    </isoform>
</comment>
<comment type="tissue specificity">
    <molecule>Isoform 3</molecule>
    <text evidence="15">Predominant isoform in retinal pigment epithelium, bladder, and stomach.</text>
</comment>
<comment type="tissue specificity">
    <text evidence="6 12 15 19">Ubiquitously expressed, but levels in brain and muscle are especially high (PubMed:10438534, PubMed:15501592, PubMed:9827529). All isoforms are equally expressed in retina (PubMed:17521428).</text>
</comment>
<comment type="miscellaneous">
    <molecule>Isoform 2</molecule>
    <text evidence="25">May be produced at very low levels due to a premature stop codon in the mRNA, leading to nonsense-mediated mRNA decay.</text>
</comment>
<comment type="miscellaneous">
    <text evidence="10 11">Although other labs have confirmed the ability of ABCC5 to transport cGMP in an ATP-dependent manner, they obtained a much lower affinity for this substrate (PubMed:12637526, PubMed:12695538). The authors conclude that ABCC5 is a low-affinity cyclic nucleotide transporter a major function in cGMP excretion is unlikely (PubMed:12637526, PubMed:12695538).</text>
</comment>
<comment type="similarity">
    <text evidence="25">Belongs to the ABC transporter superfamily. ABCC family. Conjugate transporter (TC 3.A.1.208) subfamily.</text>
</comment>
<comment type="online information" name="ABCMdb">
    <link uri="http://abcm2.hegelab.org/search"/>
    <text>Database for mutations in ABC proteins</text>
</comment>
<name>MRP5_HUMAN</name>